<name>P49_ASFK5</name>
<organismHost>
    <name type="scientific">Ornithodoros</name>
    <name type="common">relapsing fever ticks</name>
    <dbReference type="NCBI Taxonomy" id="6937"/>
</organismHost>
<organismHost>
    <name type="scientific">Phacochoerus aethiopicus</name>
    <name type="common">Warthog</name>
    <dbReference type="NCBI Taxonomy" id="85517"/>
</organismHost>
<organismHost>
    <name type="scientific">Phacochoerus africanus</name>
    <name type="common">Warthog</name>
    <dbReference type="NCBI Taxonomy" id="41426"/>
</organismHost>
<organismHost>
    <name type="scientific">Potamochoerus larvatus</name>
    <name type="common">Bushpig</name>
    <dbReference type="NCBI Taxonomy" id="273792"/>
</organismHost>
<organismHost>
    <name type="scientific">Sus scrofa</name>
    <name type="common">Pig</name>
    <dbReference type="NCBI Taxonomy" id="9823"/>
</organismHost>
<feature type="chain" id="PRO_0000373412" description="Minor capsid protein p49">
    <location>
        <begin position="1"/>
        <end position="438"/>
    </location>
</feature>
<keyword id="KW-0426">Late protein</keyword>
<keyword id="KW-0946">Virion</keyword>
<dbReference type="EMBL" id="AY261360">
    <property type="status" value="NOT_ANNOTATED_CDS"/>
    <property type="molecule type" value="Genomic_DNA"/>
</dbReference>
<dbReference type="Proteomes" id="UP000000861">
    <property type="component" value="Segment"/>
</dbReference>
<dbReference type="GO" id="GO:0044423">
    <property type="term" value="C:virion component"/>
    <property type="evidence" value="ECO:0007669"/>
    <property type="project" value="UniProtKB-KW"/>
</dbReference>
<reference key="1">
    <citation type="submission" date="2003-03" db="EMBL/GenBank/DDBJ databases">
        <title>African swine fever virus genomes.</title>
        <authorList>
            <person name="Kutish G.F."/>
            <person name="Rock D.L."/>
        </authorList>
    </citation>
    <scope>NUCLEOTIDE SEQUENCE [LARGE SCALE GENOMIC DNA]</scope>
</reference>
<evidence type="ECO:0000250" key="1">
    <source>
        <dbReference type="UniProtKB" id="Q65165"/>
    </source>
</evidence>
<evidence type="ECO:0000305" key="2"/>
<sequence>MYHDYASKLLADYRSDPPLWESDLPRHNRYSDNILNARYCGNKNGAAPVYNECTNSPGKAEKGLQLSDLRNFSFMLNPQHKNIGYGDAQDLEPYSPIPKDKLFNNLKIHRPAFSTHTENLIRRNVVRTEKKTFPQVATLKSTQKNCLTQPSSLPSLKNPKNISMPSTRFSEHIKFFSYEDVPKLRIKGTIKHEQHLGDQMPGQHYNGYIPHKDVYNILCLAHNLPASVEKVMAGRGIPLGNPHVKPNIEQELIKSTCTYTGVPILGPLPSKDLQHGREYQEFSANRHMLQVSNILHSVFANHSIKPQILEDIPTLNAQLTSIKPVSPFLNKAYQTHYMENIVTLVPRFKSIANYSSPIPHYSKRNSGQAEYFDTSKQTISRHNNYIPKYTGGIGDSKLDSSFPKDFNASSVPLTSAEKDHSLRGDNSACCISSISPSL</sequence>
<protein>
    <recommendedName>
        <fullName evidence="1">Minor capsid protein p49</fullName>
        <shortName>p49</shortName>
    </recommendedName>
</protein>
<organism>
    <name type="scientific">African swine fever virus (isolate Pig/Kenya/KEN-50/1950)</name>
    <name type="common">ASFV</name>
    <dbReference type="NCBI Taxonomy" id="561445"/>
    <lineage>
        <taxon>Viruses</taxon>
        <taxon>Varidnaviria</taxon>
        <taxon>Bamfordvirae</taxon>
        <taxon>Nucleocytoviricota</taxon>
        <taxon>Pokkesviricetes</taxon>
        <taxon>Asfuvirales</taxon>
        <taxon>Asfarviridae</taxon>
        <taxon>Asfivirus</taxon>
        <taxon>African swine fever virus</taxon>
    </lineage>
</organism>
<accession>P0C9Z6</accession>
<proteinExistence type="inferred from homology"/>
<comment type="function">
    <text evidence="1">Together with the penton and the other minor capsid proteins (M1249L, p17), forms a complicated network immediately below the outer capsid shell, stabilizing the whole capsid (By similarity). Plays an essential role in the formation of infectious virus particles. Especially required for the formation of the capsid vertices (By similarity). During virion assembly, associates with the membrane and probably mediates the docking of the penton complex to the inner membrane, where it recruits the capsomers to form the penton core (By similarity).</text>
</comment>
<comment type="subcellular location">
    <subcellularLocation>
        <location>Virion</location>
    </subcellularLocation>
    <text evidence="1">Localizes in close proximity to the capsid vertices.</text>
</comment>
<comment type="induction">
    <text evidence="2">Expressed in the late phase of the viral replicative cycle.</text>
</comment>
<comment type="similarity">
    <text evidence="2">Belongs to the asfivirus p49 structural protein family.</text>
</comment>
<gene>
    <name type="ordered locus">Ken-087</name>
</gene>